<dbReference type="EC" id="2.3.2.6" evidence="1"/>
<dbReference type="EMBL" id="AE017223">
    <property type="protein sequence ID" value="AAX74280.1"/>
    <property type="molecule type" value="Genomic_DNA"/>
</dbReference>
<dbReference type="SMR" id="Q57DK4"/>
<dbReference type="EnsemblBacteria" id="AAX74280">
    <property type="protein sequence ID" value="AAX74280"/>
    <property type="gene ID" value="BruAb1_0916"/>
</dbReference>
<dbReference type="KEGG" id="bmb:BruAb1_0916"/>
<dbReference type="HOGENOM" id="CLU_075045_1_1_5"/>
<dbReference type="Proteomes" id="UP000000540">
    <property type="component" value="Chromosome I"/>
</dbReference>
<dbReference type="GO" id="GO:0005737">
    <property type="term" value="C:cytoplasm"/>
    <property type="evidence" value="ECO:0007669"/>
    <property type="project" value="UniProtKB-SubCell"/>
</dbReference>
<dbReference type="GO" id="GO:0008914">
    <property type="term" value="F:leucyl-tRNA--protein transferase activity"/>
    <property type="evidence" value="ECO:0007669"/>
    <property type="project" value="UniProtKB-UniRule"/>
</dbReference>
<dbReference type="GO" id="GO:0030163">
    <property type="term" value="P:protein catabolic process"/>
    <property type="evidence" value="ECO:0007669"/>
    <property type="project" value="UniProtKB-UniRule"/>
</dbReference>
<dbReference type="FunFam" id="3.40.630.70:FF:000001">
    <property type="entry name" value="Leucyl/phenylalanyl-tRNA--protein transferase"/>
    <property type="match status" value="1"/>
</dbReference>
<dbReference type="Gene3D" id="3.40.630.70">
    <property type="entry name" value="Leucyl/phenylalanyl-tRNA-protein transferase, C-terminal domain"/>
    <property type="match status" value="1"/>
</dbReference>
<dbReference type="Gene3D" id="3.30.70.3550">
    <property type="entry name" value="Leucyl/phenylalanyl-tRNA-protein transferase, N-terminal domain"/>
    <property type="match status" value="1"/>
</dbReference>
<dbReference type="HAMAP" id="MF_00688">
    <property type="entry name" value="Leu_Phe_trans"/>
    <property type="match status" value="1"/>
</dbReference>
<dbReference type="InterPro" id="IPR016181">
    <property type="entry name" value="Acyl_CoA_acyltransferase"/>
</dbReference>
<dbReference type="InterPro" id="IPR004616">
    <property type="entry name" value="Leu/Phe-tRNA_Trfase"/>
</dbReference>
<dbReference type="InterPro" id="IPR042203">
    <property type="entry name" value="Leu/Phe-tRNA_Trfase_C"/>
</dbReference>
<dbReference type="InterPro" id="IPR042221">
    <property type="entry name" value="Leu/Phe-tRNA_Trfase_N"/>
</dbReference>
<dbReference type="NCBIfam" id="TIGR00667">
    <property type="entry name" value="aat"/>
    <property type="match status" value="1"/>
</dbReference>
<dbReference type="PANTHER" id="PTHR30098">
    <property type="entry name" value="LEUCYL/PHENYLALANYL-TRNA--PROTEIN TRANSFERASE"/>
    <property type="match status" value="1"/>
</dbReference>
<dbReference type="PANTHER" id="PTHR30098:SF2">
    <property type="entry name" value="LEUCYL_PHENYLALANYL-TRNA--PROTEIN TRANSFERASE"/>
    <property type="match status" value="1"/>
</dbReference>
<dbReference type="Pfam" id="PF03588">
    <property type="entry name" value="Leu_Phe_trans"/>
    <property type="match status" value="1"/>
</dbReference>
<dbReference type="SUPFAM" id="SSF55729">
    <property type="entry name" value="Acyl-CoA N-acyltransferases (Nat)"/>
    <property type="match status" value="1"/>
</dbReference>
<feature type="chain" id="PRO_0000258046" description="Leucyl/phenylalanyl-tRNA--protein transferase">
    <location>
        <begin position="1"/>
        <end position="204"/>
    </location>
</feature>
<comment type="function">
    <text evidence="1">Functions in the N-end rule pathway of protein degradation where it conjugates Leu, Phe and, less efficiently, Met from aminoacyl-tRNAs to the N-termini of proteins containing an N-terminal arginine or lysine.</text>
</comment>
<comment type="catalytic activity">
    <reaction evidence="1">
        <text>N-terminal L-lysyl-[protein] + L-leucyl-tRNA(Leu) = N-terminal L-leucyl-L-lysyl-[protein] + tRNA(Leu) + H(+)</text>
        <dbReference type="Rhea" id="RHEA:12340"/>
        <dbReference type="Rhea" id="RHEA-COMP:9613"/>
        <dbReference type="Rhea" id="RHEA-COMP:9622"/>
        <dbReference type="Rhea" id="RHEA-COMP:12670"/>
        <dbReference type="Rhea" id="RHEA-COMP:12671"/>
        <dbReference type="ChEBI" id="CHEBI:15378"/>
        <dbReference type="ChEBI" id="CHEBI:65249"/>
        <dbReference type="ChEBI" id="CHEBI:78442"/>
        <dbReference type="ChEBI" id="CHEBI:78494"/>
        <dbReference type="ChEBI" id="CHEBI:133043"/>
        <dbReference type="EC" id="2.3.2.6"/>
    </reaction>
</comment>
<comment type="catalytic activity">
    <reaction evidence="1">
        <text>N-terminal L-arginyl-[protein] + L-leucyl-tRNA(Leu) = N-terminal L-leucyl-L-arginyl-[protein] + tRNA(Leu) + H(+)</text>
        <dbReference type="Rhea" id="RHEA:50416"/>
        <dbReference type="Rhea" id="RHEA-COMP:9613"/>
        <dbReference type="Rhea" id="RHEA-COMP:9622"/>
        <dbReference type="Rhea" id="RHEA-COMP:12672"/>
        <dbReference type="Rhea" id="RHEA-COMP:12673"/>
        <dbReference type="ChEBI" id="CHEBI:15378"/>
        <dbReference type="ChEBI" id="CHEBI:64719"/>
        <dbReference type="ChEBI" id="CHEBI:78442"/>
        <dbReference type="ChEBI" id="CHEBI:78494"/>
        <dbReference type="ChEBI" id="CHEBI:133044"/>
        <dbReference type="EC" id="2.3.2.6"/>
    </reaction>
</comment>
<comment type="catalytic activity">
    <reaction evidence="1">
        <text>L-phenylalanyl-tRNA(Phe) + an N-terminal L-alpha-aminoacyl-[protein] = an N-terminal L-phenylalanyl-L-alpha-aminoacyl-[protein] + tRNA(Phe)</text>
        <dbReference type="Rhea" id="RHEA:43632"/>
        <dbReference type="Rhea" id="RHEA-COMP:9668"/>
        <dbReference type="Rhea" id="RHEA-COMP:9699"/>
        <dbReference type="Rhea" id="RHEA-COMP:10636"/>
        <dbReference type="Rhea" id="RHEA-COMP:10637"/>
        <dbReference type="ChEBI" id="CHEBI:78442"/>
        <dbReference type="ChEBI" id="CHEBI:78531"/>
        <dbReference type="ChEBI" id="CHEBI:78597"/>
        <dbReference type="ChEBI" id="CHEBI:83561"/>
        <dbReference type="EC" id="2.3.2.6"/>
    </reaction>
</comment>
<comment type="subcellular location">
    <subcellularLocation>
        <location evidence="1">Cytoplasm</location>
    </subcellularLocation>
</comment>
<comment type="similarity">
    <text evidence="1">Belongs to the L/F-transferase family.</text>
</comment>
<accession>Q57DK4</accession>
<evidence type="ECO:0000255" key="1">
    <source>
        <dbReference type="HAMAP-Rule" id="MF_00688"/>
    </source>
</evidence>
<protein>
    <recommendedName>
        <fullName evidence="1">Leucyl/phenylalanyl-tRNA--protein transferase</fullName>
        <ecNumber evidence="1">2.3.2.6</ecNumber>
    </recommendedName>
    <alternativeName>
        <fullName evidence="1">L/F-transferase</fullName>
    </alternativeName>
    <alternativeName>
        <fullName evidence="1">Leucyltransferase</fullName>
    </alternativeName>
    <alternativeName>
        <fullName evidence="1">Phenyalanyltransferase</fullName>
    </alternativeName>
</protein>
<keyword id="KW-0012">Acyltransferase</keyword>
<keyword id="KW-0963">Cytoplasm</keyword>
<keyword id="KW-0808">Transferase</keyword>
<sequence length="204" mass="23153">MTAEAPPDDDIIEPEMLLRAYATGIFPMAEEADDPEVFWVRPEKRGVIPLDGFHIPRSLQKTIRQGIFKIRLDSNFAGVIEGCASGTGERARTWINEPIRRAYAKLFEIGHCHTVEAWYEGKLAGGLYGVTLGRAFFGESMFTRKRDASKVCLAYLVQHLSRQGFVLLDTQFTTPHLERFGALEVPRKEYEEMLERALEGIARF</sequence>
<reference key="1">
    <citation type="journal article" date="2005" name="J. Bacteriol.">
        <title>Completion of the genome sequence of Brucella abortus and comparison to the highly similar genomes of Brucella melitensis and Brucella suis.</title>
        <authorList>
            <person name="Halling S.M."/>
            <person name="Peterson-Burch B.D."/>
            <person name="Bricker B.J."/>
            <person name="Zuerner R.L."/>
            <person name="Qing Z."/>
            <person name="Li L.-L."/>
            <person name="Kapur V."/>
            <person name="Alt D.P."/>
            <person name="Olsen S.C."/>
        </authorList>
    </citation>
    <scope>NUCLEOTIDE SEQUENCE [LARGE SCALE GENOMIC DNA]</scope>
    <source>
        <strain>9-941</strain>
    </source>
</reference>
<gene>
    <name evidence="1" type="primary">aat</name>
    <name type="ordered locus">BruAb1_0916</name>
</gene>
<name>LFTR_BRUAB</name>
<proteinExistence type="inferred from homology"/>
<organism>
    <name type="scientific">Brucella abortus biovar 1 (strain 9-941)</name>
    <dbReference type="NCBI Taxonomy" id="262698"/>
    <lineage>
        <taxon>Bacteria</taxon>
        <taxon>Pseudomonadati</taxon>
        <taxon>Pseudomonadota</taxon>
        <taxon>Alphaproteobacteria</taxon>
        <taxon>Hyphomicrobiales</taxon>
        <taxon>Brucellaceae</taxon>
        <taxon>Brucella/Ochrobactrum group</taxon>
        <taxon>Brucella</taxon>
    </lineage>
</organism>